<evidence type="ECO:0000250" key="1">
    <source>
        <dbReference type="UniProtKB" id="P82422"/>
    </source>
</evidence>
<evidence type="ECO:0000303" key="2">
    <source>
    </source>
</evidence>
<evidence type="ECO:0000303" key="3">
    <source>
    </source>
</evidence>
<evidence type="ECO:0000305" key="4"/>
<evidence type="ECO:0000305" key="5">
    <source>
    </source>
</evidence>
<name>LTX2A_NEOIV</name>
<dbReference type="GO" id="GO:0005576">
    <property type="term" value="C:extracellular region"/>
    <property type="evidence" value="ECO:0007669"/>
    <property type="project" value="UniProtKB-SubCell"/>
</dbReference>
<dbReference type="GO" id="GO:0042742">
    <property type="term" value="P:defense response to bacterium"/>
    <property type="evidence" value="ECO:0007669"/>
    <property type="project" value="UniProtKB-KW"/>
</dbReference>
<dbReference type="GO" id="GO:0045087">
    <property type="term" value="P:innate immune response"/>
    <property type="evidence" value="ECO:0007669"/>
    <property type="project" value="InterPro"/>
</dbReference>
<dbReference type="InterPro" id="IPR012528">
    <property type="entry name" value="Antimicrobial_9"/>
</dbReference>
<dbReference type="Pfam" id="PF08104">
    <property type="entry name" value="Antimicrobial_9"/>
    <property type="match status" value="1"/>
</dbReference>
<proteinExistence type="evidence at protein level"/>
<protein>
    <recommendedName>
        <fullName evidence="3">U1-poneritoxin-Ni2a</fullName>
        <shortName evidence="3">U1-PONTX-Ni2a</shortName>
    </recommendedName>
    <alternativeName>
        <fullName evidence="4">Poneratoxin</fullName>
    </alternativeName>
    <alternativeName>
        <fullName evidence="2">Ponericin Pi III1</fullName>
    </alternativeName>
</protein>
<reference key="1">
    <citation type="journal article" date="2014" name="Toxicon">
        <title>Diversity of peptide toxins from stinging ant venoms.</title>
        <authorList>
            <person name="Aili S.R."/>
            <person name="Touchard A."/>
            <person name="Escoubas P."/>
            <person name="Padula M.P."/>
            <person name="Orivel J."/>
            <person name="Dejean A."/>
            <person name="Nicholson G.M."/>
        </authorList>
    </citation>
    <scope>REVIEW</scope>
    <scope>PROTEIN SEQUENCE</scope>
</reference>
<reference key="2">
    <citation type="journal article" date="2016" name="Toxins">
        <title>The biochemical toxin arsenal from ant venoms.</title>
        <authorList>
            <person name="Touchard A."/>
            <person name="Aili S.R."/>
            <person name="Fox E.G."/>
            <person name="Escoubas P."/>
            <person name="Orivel J."/>
            <person name="Nicholson G.M."/>
            <person name="Dejean A."/>
        </authorList>
    </citation>
    <scope>REVIEW</scope>
    <scope>NOMENCLATURE</scope>
</reference>
<organism>
    <name type="scientific">Neoponera inversa</name>
    <name type="common">Ant</name>
    <name type="synonym">Ponera inversa</name>
    <dbReference type="NCBI Taxonomy" id="264722"/>
    <lineage>
        <taxon>Eukaryota</taxon>
        <taxon>Metazoa</taxon>
        <taxon>Ecdysozoa</taxon>
        <taxon>Arthropoda</taxon>
        <taxon>Hexapoda</taxon>
        <taxon>Insecta</taxon>
        <taxon>Pterygota</taxon>
        <taxon>Neoptera</taxon>
        <taxon>Endopterygota</taxon>
        <taxon>Hymenoptera</taxon>
        <taxon>Apocrita</taxon>
        <taxon>Aculeata</taxon>
        <taxon>Formicoidea</taxon>
        <taxon>Formicidae</taxon>
        <taxon>Ponerinae</taxon>
        <taxon>Ponerini</taxon>
        <taxon>Neoponera</taxon>
    </lineage>
</organism>
<keyword id="KW-0044">Antibiotic</keyword>
<keyword id="KW-0929">Antimicrobial</keyword>
<keyword id="KW-0903">Direct protein sequencing</keyword>
<keyword id="KW-0964">Secreted</keyword>
<accession>P0DSJ3</accession>
<feature type="peptide" id="PRO_0000447063" description="U1-poneritoxin-Ni2a">
    <location>
        <begin position="1"/>
        <end position="24"/>
    </location>
</feature>
<sequence>LLKELWKKIKGAGKAVLGKIKGLL</sequence>
<comment type="function">
    <text evidence="1">Has a broad spectrum of activity against both Gram-positive and Gram-negative bacteria. Is inactive against yeast, erythrocytes, and insects.</text>
</comment>
<comment type="subcellular location">
    <subcellularLocation>
        <location evidence="5">Secreted</location>
    </subcellularLocation>
</comment>
<comment type="tissue specificity">
    <text evidence="5">Expressed by the venom gland.</text>
</comment>
<comment type="similarity">
    <text evidence="4">Belongs to the ponericin-L family.</text>
</comment>